<protein>
    <recommendedName>
        <fullName>Collagenase 3</fullName>
        <ecNumber>3.4.24.-</ecNumber>
    </recommendedName>
    <alternativeName>
        <fullName>Matrix metalloproteinase-13</fullName>
        <shortName>MMP-13</shortName>
    </alternativeName>
</protein>
<evidence type="ECO:0000250" key="1"/>
<evidence type="ECO:0000250" key="2">
    <source>
        <dbReference type="UniProtKB" id="P45452"/>
    </source>
</evidence>
<evidence type="ECO:0000255" key="3"/>
<evidence type="ECO:0000255" key="4">
    <source>
        <dbReference type="PROSITE-ProRule" id="PRU10095"/>
    </source>
</evidence>
<evidence type="ECO:0000256" key="5">
    <source>
        <dbReference type="SAM" id="MobiDB-lite"/>
    </source>
</evidence>
<evidence type="ECO:0000305" key="6"/>
<reference key="1">
    <citation type="journal article" date="1998" name="Biochem. J.">
        <title>Cloning of the gene for interstitial collagenase-3 (matrix metalloproteinase-13) from rabbit synovial fibroblasts: differential expression with collagenase-1 (matrix metalloproteinase-1).</title>
        <authorList>
            <person name="Vincenti M.P."/>
            <person name="Coon C.I."/>
            <person name="Mengshol J.A."/>
            <person name="Yocum S."/>
            <person name="Mitchell P."/>
            <person name="Brinckerhoff C.E."/>
        </authorList>
    </citation>
    <scope>NUCLEOTIDE SEQUENCE [MRNA]</scope>
    <source>
        <strain>New Zealand white</strain>
        <tissue>Synovium</tissue>
    </source>
</reference>
<dbReference type="EC" id="3.4.24.-"/>
<dbReference type="EMBL" id="AF059201">
    <property type="protein sequence ID" value="AAC39251.1"/>
    <property type="molecule type" value="mRNA"/>
</dbReference>
<dbReference type="RefSeq" id="NP_001075506.1">
    <property type="nucleotide sequence ID" value="NM_001082037.1"/>
</dbReference>
<dbReference type="SMR" id="O62806"/>
<dbReference type="FunCoup" id="O62806">
    <property type="interactions" value="30"/>
</dbReference>
<dbReference type="STRING" id="9986.ENSOCUP00000002145"/>
<dbReference type="MEROPS" id="M10.013"/>
<dbReference type="GlyCosmos" id="O62806">
    <property type="glycosylation" value="4 sites, No reported glycans"/>
</dbReference>
<dbReference type="PaxDb" id="9986-ENSOCUP00000002145"/>
<dbReference type="GeneID" id="100008685"/>
<dbReference type="KEGG" id="ocu:100008685"/>
<dbReference type="CTD" id="4322"/>
<dbReference type="eggNOG" id="KOG1565">
    <property type="taxonomic scope" value="Eukaryota"/>
</dbReference>
<dbReference type="InParanoid" id="O62806"/>
<dbReference type="OrthoDB" id="406838at2759"/>
<dbReference type="Proteomes" id="UP000001811">
    <property type="component" value="Unplaced"/>
</dbReference>
<dbReference type="GO" id="GO:0031012">
    <property type="term" value="C:extracellular matrix"/>
    <property type="evidence" value="ECO:0007669"/>
    <property type="project" value="InterPro"/>
</dbReference>
<dbReference type="GO" id="GO:0005615">
    <property type="term" value="C:extracellular space"/>
    <property type="evidence" value="ECO:0007669"/>
    <property type="project" value="TreeGrafter"/>
</dbReference>
<dbReference type="GO" id="GO:0005509">
    <property type="term" value="F:calcium ion binding"/>
    <property type="evidence" value="ECO:0000250"/>
    <property type="project" value="UniProtKB"/>
</dbReference>
<dbReference type="GO" id="GO:0005518">
    <property type="term" value="F:collagen binding"/>
    <property type="evidence" value="ECO:0000250"/>
    <property type="project" value="UniProtKB"/>
</dbReference>
<dbReference type="GO" id="GO:0004175">
    <property type="term" value="F:endopeptidase activity"/>
    <property type="evidence" value="ECO:0000250"/>
    <property type="project" value="UniProtKB"/>
</dbReference>
<dbReference type="GO" id="GO:0004222">
    <property type="term" value="F:metalloendopeptidase activity"/>
    <property type="evidence" value="ECO:0000250"/>
    <property type="project" value="UniProtKB"/>
</dbReference>
<dbReference type="GO" id="GO:0008270">
    <property type="term" value="F:zinc ion binding"/>
    <property type="evidence" value="ECO:0000250"/>
    <property type="project" value="UniProtKB"/>
</dbReference>
<dbReference type="GO" id="GO:0060349">
    <property type="term" value="P:bone morphogenesis"/>
    <property type="evidence" value="ECO:0000250"/>
    <property type="project" value="UniProtKB"/>
</dbReference>
<dbReference type="GO" id="GO:0030574">
    <property type="term" value="P:collagen catabolic process"/>
    <property type="evidence" value="ECO:0000250"/>
    <property type="project" value="UniProtKB"/>
</dbReference>
<dbReference type="GO" id="GO:0022617">
    <property type="term" value="P:extracellular matrix disassembly"/>
    <property type="evidence" value="ECO:0000250"/>
    <property type="project" value="UniProtKB"/>
</dbReference>
<dbReference type="GO" id="GO:0006508">
    <property type="term" value="P:proteolysis"/>
    <property type="evidence" value="ECO:0007669"/>
    <property type="project" value="UniProtKB-KW"/>
</dbReference>
<dbReference type="CDD" id="cd00094">
    <property type="entry name" value="HX"/>
    <property type="match status" value="1"/>
</dbReference>
<dbReference type="CDD" id="cd04278">
    <property type="entry name" value="ZnMc_MMP"/>
    <property type="match status" value="1"/>
</dbReference>
<dbReference type="FunFam" id="3.40.390.10:FF:000007">
    <property type="entry name" value="Collagenase 3"/>
    <property type="match status" value="1"/>
</dbReference>
<dbReference type="FunFam" id="2.110.10.10:FF:000002">
    <property type="entry name" value="Matrix metallopeptidase 3"/>
    <property type="match status" value="1"/>
</dbReference>
<dbReference type="Gene3D" id="3.40.390.10">
    <property type="entry name" value="Collagenase (Catalytic Domain)"/>
    <property type="match status" value="1"/>
</dbReference>
<dbReference type="Gene3D" id="2.110.10.10">
    <property type="entry name" value="Hemopexin-like domain"/>
    <property type="match status" value="1"/>
</dbReference>
<dbReference type="InterPro" id="IPR000585">
    <property type="entry name" value="Hemopexin-like_dom"/>
</dbReference>
<dbReference type="InterPro" id="IPR036375">
    <property type="entry name" value="Hemopexin-like_dom_sf"/>
</dbReference>
<dbReference type="InterPro" id="IPR018487">
    <property type="entry name" value="Hemopexin-like_repeat"/>
</dbReference>
<dbReference type="InterPro" id="IPR018486">
    <property type="entry name" value="Hemopexin_CS"/>
</dbReference>
<dbReference type="InterPro" id="IPR033739">
    <property type="entry name" value="M10A_MMP"/>
</dbReference>
<dbReference type="InterPro" id="IPR024079">
    <property type="entry name" value="MetalloPept_cat_dom_sf"/>
</dbReference>
<dbReference type="InterPro" id="IPR001818">
    <property type="entry name" value="Pept_M10_metallopeptidase"/>
</dbReference>
<dbReference type="InterPro" id="IPR021190">
    <property type="entry name" value="Pept_M10A"/>
</dbReference>
<dbReference type="InterPro" id="IPR021158">
    <property type="entry name" value="Pept_M10A_Zn_BS"/>
</dbReference>
<dbReference type="InterPro" id="IPR006026">
    <property type="entry name" value="Peptidase_Metallo"/>
</dbReference>
<dbReference type="InterPro" id="IPR002477">
    <property type="entry name" value="Peptidoglycan-bd-like"/>
</dbReference>
<dbReference type="InterPro" id="IPR036365">
    <property type="entry name" value="PGBD-like_sf"/>
</dbReference>
<dbReference type="PANTHER" id="PTHR10201:SF165">
    <property type="entry name" value="COLLAGENASE 3"/>
    <property type="match status" value="1"/>
</dbReference>
<dbReference type="PANTHER" id="PTHR10201">
    <property type="entry name" value="MATRIX METALLOPROTEINASE"/>
    <property type="match status" value="1"/>
</dbReference>
<dbReference type="Pfam" id="PF00045">
    <property type="entry name" value="Hemopexin"/>
    <property type="match status" value="4"/>
</dbReference>
<dbReference type="Pfam" id="PF00413">
    <property type="entry name" value="Peptidase_M10"/>
    <property type="match status" value="1"/>
</dbReference>
<dbReference type="Pfam" id="PF01471">
    <property type="entry name" value="PG_binding_1"/>
    <property type="match status" value="1"/>
</dbReference>
<dbReference type="PIRSF" id="PIRSF001191">
    <property type="entry name" value="Peptidase_M10A_matrix"/>
    <property type="match status" value="1"/>
</dbReference>
<dbReference type="PRINTS" id="PR00138">
    <property type="entry name" value="MATRIXIN"/>
</dbReference>
<dbReference type="SMART" id="SM00120">
    <property type="entry name" value="HX"/>
    <property type="match status" value="4"/>
</dbReference>
<dbReference type="SMART" id="SM00235">
    <property type="entry name" value="ZnMc"/>
    <property type="match status" value="1"/>
</dbReference>
<dbReference type="SUPFAM" id="SSF50923">
    <property type="entry name" value="Hemopexin-like domain"/>
    <property type="match status" value="1"/>
</dbReference>
<dbReference type="SUPFAM" id="SSF55486">
    <property type="entry name" value="Metalloproteases ('zincins'), catalytic domain"/>
    <property type="match status" value="1"/>
</dbReference>
<dbReference type="SUPFAM" id="SSF47090">
    <property type="entry name" value="PGBD-like"/>
    <property type="match status" value="1"/>
</dbReference>
<dbReference type="PROSITE" id="PS00546">
    <property type="entry name" value="CYSTEINE_SWITCH"/>
    <property type="match status" value="1"/>
</dbReference>
<dbReference type="PROSITE" id="PS00024">
    <property type="entry name" value="HEMOPEXIN"/>
    <property type="match status" value="1"/>
</dbReference>
<dbReference type="PROSITE" id="PS51642">
    <property type="entry name" value="HEMOPEXIN_2"/>
    <property type="match status" value="4"/>
</dbReference>
<dbReference type="PROSITE" id="PS00142">
    <property type="entry name" value="ZINC_PROTEASE"/>
    <property type="match status" value="1"/>
</dbReference>
<proteinExistence type="evidence at transcript level"/>
<sequence>MQPGVLAACLLLSWTHCWSLPLLNSNEDDDLSEEDFQFAESYLRSYYHPLNPAGILKKNAAGSMVDRLREMQSFFGLEVTGKLDDNTLAIMKQPRCGVPDVGEYNVFPRTLKWSQTNLTYRIVNYTPDLTHSEVEKAFKKAFKVWSDVTPLNFTRIHNGTADIMISFGTKEHGDFYPFDGPSGLLAHAFPPGPNYGGDAHFDDDETWTSSSKGYNLFLVAAHEFGHSLGLDHSKDPGALMFPIYTYTGKSHFMLPDDDVQGIQSLYGPGDEDPNPKHPKTPDKCDPSLSLDAITSLRGETMIFKDRFFWRLHPQQVDAELFLTKSFWPELPNRIDAAYEHPARDLIFIFRGKKFWAPNGYDILEGYPQKLSELGFPREVKKISAAVHFEDTGKTLFFSGNQVWSYDDTNHTMDQDYPRLIEEEFPGIGGKVDAVYEKNGYIYFFNGPIQFEYSIWSKRIVRVMPTNSLLWC</sequence>
<name>MMP13_RABIT</name>
<accession>O62806</accession>
<organism>
    <name type="scientific">Oryctolagus cuniculus</name>
    <name type="common">Rabbit</name>
    <dbReference type="NCBI Taxonomy" id="9986"/>
    <lineage>
        <taxon>Eukaryota</taxon>
        <taxon>Metazoa</taxon>
        <taxon>Chordata</taxon>
        <taxon>Craniata</taxon>
        <taxon>Vertebrata</taxon>
        <taxon>Euteleostomi</taxon>
        <taxon>Mammalia</taxon>
        <taxon>Eutheria</taxon>
        <taxon>Euarchontoglires</taxon>
        <taxon>Glires</taxon>
        <taxon>Lagomorpha</taxon>
        <taxon>Leporidae</taxon>
        <taxon>Oryctolagus</taxon>
    </lineage>
</organism>
<feature type="signal peptide" evidence="3">
    <location>
        <begin position="1"/>
        <end position="19"/>
    </location>
</feature>
<feature type="propeptide" id="PRO_0000028792" description="Activation peptide" evidence="3">
    <location>
        <begin position="20"/>
        <end position="103"/>
    </location>
</feature>
<feature type="chain" id="PRO_0000028793" description="Collagenase 3">
    <location>
        <begin position="104"/>
        <end position="471"/>
    </location>
</feature>
<feature type="repeat" description="Hemopexin 1">
    <location>
        <begin position="281"/>
        <end position="330"/>
    </location>
</feature>
<feature type="repeat" description="Hemopexin 2">
    <location>
        <begin position="331"/>
        <end position="377"/>
    </location>
</feature>
<feature type="repeat" description="Hemopexin 3">
    <location>
        <begin position="379"/>
        <end position="427"/>
    </location>
</feature>
<feature type="repeat" description="Hemopexin 4">
    <location>
        <begin position="428"/>
        <end position="471"/>
    </location>
</feature>
<feature type="region of interest" description="Interaction with TIMP2" evidence="1">
    <location>
        <begin position="176"/>
        <end position="246"/>
    </location>
</feature>
<feature type="region of interest" description="Disordered" evidence="5">
    <location>
        <begin position="263"/>
        <end position="284"/>
    </location>
</feature>
<feature type="region of interest" description="Interaction with collagen" evidence="1">
    <location>
        <begin position="268"/>
        <end position="471"/>
    </location>
</feature>
<feature type="short sequence motif" description="Cysteine switch" evidence="1">
    <location>
        <begin position="94"/>
        <end position="101"/>
    </location>
</feature>
<feature type="compositionally biased region" description="Basic and acidic residues" evidence="5">
    <location>
        <begin position="273"/>
        <end position="284"/>
    </location>
</feature>
<feature type="active site" evidence="4">
    <location>
        <position position="223"/>
    </location>
</feature>
<feature type="binding site" description="in inhibited form" evidence="1">
    <location>
        <position position="96"/>
    </location>
    <ligand>
        <name>Zn(2+)</name>
        <dbReference type="ChEBI" id="CHEBI:29105"/>
        <label>2</label>
        <note>catalytic</note>
    </ligand>
</feature>
<feature type="binding site" evidence="1">
    <location>
        <position position="128"/>
    </location>
    <ligand>
        <name>Ca(2+)</name>
        <dbReference type="ChEBI" id="CHEBI:29108"/>
        <label>1</label>
    </ligand>
</feature>
<feature type="binding site" evidence="1">
    <location>
        <position position="162"/>
    </location>
    <ligand>
        <name>Ca(2+)</name>
        <dbReference type="ChEBI" id="CHEBI:29108"/>
        <label>2</label>
    </ligand>
</feature>
<feature type="binding site" evidence="1">
    <location>
        <position position="172"/>
    </location>
    <ligand>
        <name>Zn(2+)</name>
        <dbReference type="ChEBI" id="CHEBI:29105"/>
        <label>1</label>
    </ligand>
</feature>
<feature type="binding site" evidence="1">
    <location>
        <position position="174"/>
    </location>
    <ligand>
        <name>Zn(2+)</name>
        <dbReference type="ChEBI" id="CHEBI:29105"/>
        <label>1</label>
    </ligand>
</feature>
<feature type="binding site" evidence="1">
    <location>
        <position position="179"/>
    </location>
    <ligand>
        <name>Ca(2+)</name>
        <dbReference type="ChEBI" id="CHEBI:29108"/>
        <label>3</label>
    </ligand>
</feature>
<feature type="binding site" evidence="1">
    <location>
        <position position="180"/>
    </location>
    <ligand>
        <name>Ca(2+)</name>
        <dbReference type="ChEBI" id="CHEBI:29108"/>
        <label>3</label>
    </ligand>
</feature>
<feature type="binding site" evidence="1">
    <location>
        <position position="182"/>
    </location>
    <ligand>
        <name>Ca(2+)</name>
        <dbReference type="ChEBI" id="CHEBI:29108"/>
        <label>3</label>
    </ligand>
</feature>
<feature type="binding site" evidence="1">
    <location>
        <position position="184"/>
    </location>
    <ligand>
        <name>Ca(2+)</name>
        <dbReference type="ChEBI" id="CHEBI:29108"/>
        <label>3</label>
    </ligand>
</feature>
<feature type="binding site" evidence="1">
    <location>
        <position position="187"/>
    </location>
    <ligand>
        <name>Zn(2+)</name>
        <dbReference type="ChEBI" id="CHEBI:29105"/>
        <label>1</label>
    </ligand>
</feature>
<feature type="binding site" evidence="1">
    <location>
        <position position="194"/>
    </location>
    <ligand>
        <name>Ca(2+)</name>
        <dbReference type="ChEBI" id="CHEBI:29108"/>
        <label>2</label>
    </ligand>
</feature>
<feature type="binding site" evidence="1">
    <location>
        <position position="196"/>
    </location>
    <ligand>
        <name>Ca(2+)</name>
        <dbReference type="ChEBI" id="CHEBI:29108"/>
        <label>2</label>
    </ligand>
</feature>
<feature type="binding site" evidence="1">
    <location>
        <position position="198"/>
    </location>
    <ligand>
        <name>Ca(2+)</name>
        <dbReference type="ChEBI" id="CHEBI:29108"/>
        <label>2</label>
    </ligand>
</feature>
<feature type="binding site" evidence="1">
    <location>
        <position position="200"/>
    </location>
    <ligand>
        <name>Zn(2+)</name>
        <dbReference type="ChEBI" id="CHEBI:29105"/>
        <label>1</label>
    </ligand>
</feature>
<feature type="binding site" evidence="1">
    <location>
        <position position="202"/>
    </location>
    <ligand>
        <name>Ca(2+)</name>
        <dbReference type="ChEBI" id="CHEBI:29108"/>
        <label>3</label>
    </ligand>
</feature>
<feature type="binding site" evidence="1">
    <location>
        <position position="203"/>
    </location>
    <ligand>
        <name>Ca(2+)</name>
        <dbReference type="ChEBI" id="CHEBI:29108"/>
        <label>1</label>
    </ligand>
</feature>
<feature type="binding site" evidence="1">
    <location>
        <position position="205"/>
    </location>
    <ligand>
        <name>Ca(2+)</name>
        <dbReference type="ChEBI" id="CHEBI:29108"/>
        <label>1</label>
    </ligand>
</feature>
<feature type="binding site" evidence="1">
    <location>
        <position position="205"/>
    </location>
    <ligand>
        <name>Ca(2+)</name>
        <dbReference type="ChEBI" id="CHEBI:29108"/>
        <label>3</label>
    </ligand>
</feature>
<feature type="binding site" evidence="1">
    <location>
        <position position="222"/>
    </location>
    <ligand>
        <name>Zn(2+)</name>
        <dbReference type="ChEBI" id="CHEBI:29105"/>
        <label>2</label>
        <note>catalytic</note>
    </ligand>
</feature>
<feature type="binding site" evidence="1">
    <location>
        <position position="226"/>
    </location>
    <ligand>
        <name>Zn(2+)</name>
        <dbReference type="ChEBI" id="CHEBI:29105"/>
        <label>2</label>
        <note>catalytic</note>
    </ligand>
</feature>
<feature type="binding site" evidence="1">
    <location>
        <position position="232"/>
    </location>
    <ligand>
        <name>Zn(2+)</name>
        <dbReference type="ChEBI" id="CHEBI:29105"/>
        <label>2</label>
        <note>catalytic</note>
    </ligand>
</feature>
<feature type="binding site" evidence="1">
    <location>
        <position position="240"/>
    </location>
    <ligand>
        <name>Zn(2+)</name>
        <dbReference type="ChEBI" id="CHEBI:29105"/>
        <label>2</label>
        <note>catalytic</note>
    </ligand>
</feature>
<feature type="binding site" evidence="1">
    <location>
        <position position="291"/>
    </location>
    <ligand>
        <name>Ca(2+)</name>
        <dbReference type="ChEBI" id="CHEBI:29108"/>
        <label>4</label>
    </ligand>
</feature>
<feature type="binding site" evidence="1">
    <location>
        <position position="293"/>
    </location>
    <ligand>
        <name>Ca(2+)</name>
        <dbReference type="ChEBI" id="CHEBI:29108"/>
        <label>5</label>
    </ligand>
</feature>
<feature type="binding site" evidence="1">
    <location>
        <position position="335"/>
    </location>
    <ligand>
        <name>Ca(2+)</name>
        <dbReference type="ChEBI" id="CHEBI:29108"/>
        <label>4</label>
    </ligand>
</feature>
<feature type="binding site" evidence="1">
    <location>
        <position position="337"/>
    </location>
    <ligand>
        <name>Ca(2+)</name>
        <dbReference type="ChEBI" id="CHEBI:29108"/>
        <label>5</label>
    </ligand>
</feature>
<feature type="binding site" evidence="1">
    <location>
        <position position="383"/>
    </location>
    <ligand>
        <name>Ca(2+)</name>
        <dbReference type="ChEBI" id="CHEBI:29108"/>
        <label>4</label>
    </ligand>
</feature>
<feature type="binding site" evidence="1">
    <location>
        <position position="385"/>
    </location>
    <ligand>
        <name>Ca(2+)</name>
        <dbReference type="ChEBI" id="CHEBI:29108"/>
        <label>5</label>
    </ligand>
</feature>
<feature type="binding site" evidence="1">
    <location>
        <position position="432"/>
    </location>
    <ligand>
        <name>Ca(2+)</name>
        <dbReference type="ChEBI" id="CHEBI:29108"/>
        <label>4</label>
    </ligand>
</feature>
<feature type="binding site" evidence="1">
    <location>
        <position position="434"/>
    </location>
    <ligand>
        <name>Ca(2+)</name>
        <dbReference type="ChEBI" id="CHEBI:29108"/>
        <label>5</label>
    </ligand>
</feature>
<feature type="modified residue" description="Phosphotyrosine; by PKDCC" evidence="2">
    <location>
        <position position="366"/>
    </location>
</feature>
<feature type="glycosylation site" description="N-linked (GlcNAc...) asparagine" evidence="3">
    <location>
        <position position="117"/>
    </location>
</feature>
<feature type="glycosylation site" description="N-linked (GlcNAc...) asparagine" evidence="3">
    <location>
        <position position="152"/>
    </location>
</feature>
<feature type="glycosylation site" description="N-linked (GlcNAc...) asparagine" evidence="3">
    <location>
        <position position="158"/>
    </location>
</feature>
<feature type="glycosylation site" description="N-linked (GlcNAc...) asparagine" evidence="3">
    <location>
        <position position="409"/>
    </location>
</feature>
<feature type="disulfide bond" evidence="1">
    <location>
        <begin position="284"/>
        <end position="471"/>
    </location>
</feature>
<comment type="function">
    <text evidence="1">Plays a role in the degradation of extracellular matrix proteins including fibrillar collagen, fibronectin, TNC and ACAN. Cleaves triple helical collagens, including type I, type II and type III collagen, but has the highest activity with soluble type II collagen. Can also degrade collagen type IV, type XIV and type X. May also function by activating or degrading key regulatory proteins, such as TGFB1 and CCN2. Plays a role in wound healing, tissue remodeling, cartilage degradation, bone development, bone mineralization and ossification. Required for normal embryonic bone development and ossification. Plays a role in the healing of bone fractures via endochondral ossification. Plays a role in wound healing, probably by a mechanism that involves proteolytic activation of TGFB1 and degradation of CCN2. Plays a role in keratinocyte migration during wound healing. May play a role in cell migration and in tumor cell invasion (By similarity).</text>
</comment>
<comment type="cofactor">
    <cofactor evidence="1">
        <name>Ca(2+)</name>
        <dbReference type="ChEBI" id="CHEBI:29108"/>
    </cofactor>
    <text evidence="1">Can bind about 5 Ca(2+) ions per subunit.</text>
</comment>
<comment type="cofactor">
    <cofactor evidence="1">
        <name>Zn(2+)</name>
        <dbReference type="ChEBI" id="CHEBI:29105"/>
    </cofactor>
    <text evidence="1">Binds 2 Zn(2+) ions per subunit.</text>
</comment>
<comment type="subcellular location">
    <subcellularLocation>
        <location evidence="6">Secreted</location>
        <location evidence="6">Extracellular space</location>
        <location evidence="6">Extracellular matrix</location>
    </subcellularLocation>
    <subcellularLocation>
        <location evidence="1">Secreted</location>
    </subcellularLocation>
</comment>
<comment type="domain">
    <text evidence="1">The C-terminal region binds to collagen.</text>
</comment>
<comment type="domain">
    <text evidence="1">The conserved cysteine present in the cysteine-switch motif binds the catalytic zinc ion, thus inhibiting the enzyme. The dissociation of the cysteine from the zinc ion upon the activation-peptide release activates the enzyme (By similarity).</text>
</comment>
<comment type="PTM">
    <text evidence="1">The proenzyme is activated by removal of the propeptide; this cleavage can be effected by other matrix metalloproteinases, such as MMP2, MMP3 and MMP14 and may involve several cleavage steps. Cleavage can also be autocatalytic, after partial maturation by another protease or after treatment with 4-aminophenylmercuric acetate (APMA) (in vitro) (By similarity).</text>
</comment>
<comment type="PTM">
    <text evidence="1">N-glycosylated.</text>
</comment>
<comment type="PTM">
    <text evidence="2">Tyrosine phosphorylated by PKDCC/VLK.</text>
</comment>
<comment type="similarity">
    <text evidence="6">Belongs to the peptidase M10A family.</text>
</comment>
<keyword id="KW-0106">Calcium</keyword>
<keyword id="KW-0177">Collagen degradation</keyword>
<keyword id="KW-1015">Disulfide bond</keyword>
<keyword id="KW-0272">Extracellular matrix</keyword>
<keyword id="KW-0325">Glycoprotein</keyword>
<keyword id="KW-0378">Hydrolase</keyword>
<keyword id="KW-0479">Metal-binding</keyword>
<keyword id="KW-0482">Metalloprotease</keyword>
<keyword id="KW-0597">Phosphoprotein</keyword>
<keyword id="KW-0645">Protease</keyword>
<keyword id="KW-1185">Reference proteome</keyword>
<keyword id="KW-0677">Repeat</keyword>
<keyword id="KW-0964">Secreted</keyword>
<keyword id="KW-0732">Signal</keyword>
<keyword id="KW-0862">Zinc</keyword>
<keyword id="KW-0865">Zymogen</keyword>
<gene>
    <name type="primary">MMP13</name>
</gene>